<gene>
    <name type="primary">E5</name>
</gene>
<organismHost>
    <name type="scientific">Homo sapiens</name>
    <name type="common">Human</name>
    <dbReference type="NCBI Taxonomy" id="9606"/>
</organismHost>
<evidence type="ECO:0000305" key="1"/>
<comment type="similarity">
    <text evidence="1">Belongs to the papillomaviridae E5 protein family.</text>
</comment>
<sequence length="84" mass="9536">MIELNISTVSIVLCFLLCFCVLLFVCLVIRPLVLSVSVYATLLLLIVILWVIATSPLRCFCIYVVFIYIPLFVIHTHASFLSQQ</sequence>
<feature type="chain" id="PRO_0000133291" description="Probable protein E5">
    <location>
        <begin position="1"/>
        <end position="84"/>
    </location>
</feature>
<proteinExistence type="inferred from homology"/>
<protein>
    <recommendedName>
        <fullName>Probable protein E5</fullName>
    </recommendedName>
</protein>
<keyword id="KW-0244">Early protein</keyword>
<keyword id="KW-1185">Reference proteome</keyword>
<accession>P17385</accession>
<reference key="1">
    <citation type="journal article" date="1989" name="Virology">
        <title>Nucleotide sequence of human papillomavirus type 31: a cervical neoplasia-associated virus.</title>
        <authorList>
            <person name="Goldsborough M.D."/>
            <person name="Disilvestre D."/>
            <person name="Temple G.F."/>
            <person name="Lorincz A.T."/>
        </authorList>
    </citation>
    <scope>NUCLEOTIDE SEQUENCE [GENOMIC DNA]</scope>
</reference>
<name>VE5_HPV31</name>
<organism>
    <name type="scientific">Human papillomavirus 31</name>
    <dbReference type="NCBI Taxonomy" id="10585"/>
    <lineage>
        <taxon>Viruses</taxon>
        <taxon>Monodnaviria</taxon>
        <taxon>Shotokuvirae</taxon>
        <taxon>Cossaviricota</taxon>
        <taxon>Papovaviricetes</taxon>
        <taxon>Zurhausenvirales</taxon>
        <taxon>Papillomaviridae</taxon>
        <taxon>Firstpapillomavirinae</taxon>
        <taxon>Alphapapillomavirus</taxon>
        <taxon>Alphapapillomavirus 9</taxon>
    </lineage>
</organism>
<dbReference type="EMBL" id="J04353">
    <property type="protein sequence ID" value="AAA46954.1"/>
    <property type="molecule type" value="Genomic_DNA"/>
</dbReference>
<dbReference type="PIR" id="F32444">
    <property type="entry name" value="W5WL31"/>
</dbReference>
<dbReference type="Proteomes" id="UP000009116">
    <property type="component" value="Genome"/>
</dbReference>
<dbReference type="InterPro" id="IPR004270">
    <property type="entry name" value="Papilloma_E5_alpha"/>
</dbReference>
<dbReference type="Pfam" id="PF03025">
    <property type="entry name" value="Papilloma_E5"/>
    <property type="match status" value="1"/>
</dbReference>